<evidence type="ECO:0000255" key="1"/>
<evidence type="ECO:0000255" key="2">
    <source>
        <dbReference type="PROSITE-ProRule" id="PRU00498"/>
    </source>
</evidence>
<evidence type="ECO:0000269" key="3">
    <source>
    </source>
</evidence>
<evidence type="ECO:0000269" key="4">
    <source>
    </source>
</evidence>
<evidence type="ECO:0000303" key="5">
    <source>
    </source>
</evidence>
<evidence type="ECO:0000305" key="6"/>
<evidence type="ECO:0000312" key="7">
    <source>
        <dbReference type="Proteomes" id="UP000001940"/>
    </source>
</evidence>
<evidence type="ECO:0000312" key="8">
    <source>
        <dbReference type="WormBase" id="M03F8.4"/>
    </source>
</evidence>
<name>GALT1_CAEEL</name>
<organism evidence="7">
    <name type="scientific">Caenorhabditis elegans</name>
    <dbReference type="NCBI Taxonomy" id="6239"/>
    <lineage>
        <taxon>Eukaryota</taxon>
        <taxon>Metazoa</taxon>
        <taxon>Ecdysozoa</taxon>
        <taxon>Nematoda</taxon>
        <taxon>Chromadorea</taxon>
        <taxon>Rhabditida</taxon>
        <taxon>Rhabditina</taxon>
        <taxon>Rhabditomorpha</taxon>
        <taxon>Rhabditoidea</taxon>
        <taxon>Rhabditidae</taxon>
        <taxon>Peloderinae</taxon>
        <taxon>Caenorhabditis</taxon>
    </lineage>
</organism>
<accession>O16374</accession>
<accession>G4RVA7</accession>
<comment type="function">
    <text evidence="3 4">Catalyzes the transfer of beta-galactose from UDP-galactose to position 4 of alpha-1,6-linked fucose at the reducing end GlcNAc in N-glycan cores (PubMed:19858195). Involved in susceptibility to the nematotoxic C.cinerea galectin Cgl2, likely by contributing to the synthesis of core alpha-1,6-fucosylated N-glycans to which Cgl2 binds (PubMed:20062796).</text>
</comment>
<comment type="cofactor">
    <cofactor evidence="3">
        <name>Mn(2+)</name>
        <dbReference type="ChEBI" id="CHEBI:29035"/>
    </cofactor>
    <text evidence="3">Can also use Fe(2+) and Co(2+).</text>
</comment>
<comment type="activity regulation">
    <text evidence="3">Inhibited by EDTA, Cu(2+) and Zn(2+).</text>
</comment>
<comment type="biophysicochemical properties">
    <kinetics>
        <KM evidence="3">84 uM for UDP-galactose</KM>
    </kinetics>
</comment>
<comment type="subcellular location">
    <subcellularLocation>
        <location evidence="5">Golgi apparatus</location>
        <location evidence="5">Golgi stack membrane</location>
        <topology evidence="5">Single-pass type II membrane protein</topology>
    </subcellularLocation>
    <text evidence="3">Localizes to vesicles or organelles in coelomocytes.</text>
</comment>
<comment type="tissue specificity">
    <text evidence="3">Expressed in intestine and coelomocytes.</text>
</comment>
<comment type="PTM">
    <text evidence="3">N-glycosylated.</text>
</comment>
<comment type="similarity">
    <text evidence="6">Belongs to the glycosyltransferase 92 family.</text>
</comment>
<keyword id="KW-0325">Glycoprotein</keyword>
<keyword id="KW-0328">Glycosyltransferase</keyword>
<keyword id="KW-0333">Golgi apparatus</keyword>
<keyword id="KW-0464">Manganese</keyword>
<keyword id="KW-0472">Membrane</keyword>
<keyword id="KW-0479">Metal-binding</keyword>
<keyword id="KW-1185">Reference proteome</keyword>
<keyword id="KW-0735">Signal-anchor</keyword>
<keyword id="KW-0808">Transferase</keyword>
<keyword id="KW-0812">Transmembrane</keyword>
<keyword id="KW-1133">Transmembrane helix</keyword>
<sequence>MPRITASKIVLLIALSFCITVIYHFPIATRSSKEYDEYGNEYENVASIESDIKNVRRLLDEVPDPSQNRLQFLKLDEHAFAFSAYTDDRNGNMGYKYVRVLMFITSQDNFSCEINGRKSTDVSLYEFSENHKMKWQMFILNCKLPDGIDFNNVSSVKVIRSTTKQFVDVPIRYRIQDEKIITPDEYDYKMSICVPALFGNGYDAKRIVEFIELNTLQGIEKIYIYTNQKELDGSMKKTLKYYSDNHKITLIDYTLPFREDGVWYHGQLATVTDCLLRNTGITKYTFFNDFDEFFVPVIKSRTLFETISGLFEDPTIGSQRTALKYINAKIKSAPYSLKNIVSEKRIETRFTKCVVRPEMVFEQGIHHTSRVIQDNYKTVSHGGSLLRVYHYKDKKYCCEDESLLKKRHGDQLREKFDSVVGLLDL</sequence>
<proteinExistence type="evidence at protein level"/>
<dbReference type="EC" id="2.4.1.-" evidence="3"/>
<dbReference type="EMBL" id="BX284605">
    <property type="protein sequence ID" value="CCD64148.1"/>
    <property type="molecule type" value="Genomic_DNA"/>
</dbReference>
<dbReference type="RefSeq" id="NP_504545.2">
    <property type="nucleotide sequence ID" value="NM_072144.8"/>
</dbReference>
<dbReference type="SMR" id="O16374"/>
<dbReference type="FunCoup" id="O16374">
    <property type="interactions" value="32"/>
</dbReference>
<dbReference type="STRING" id="6239.M03F8.4.1"/>
<dbReference type="GlyCosmos" id="O16374">
    <property type="glycosylation" value="2 sites, No reported glycans"/>
</dbReference>
<dbReference type="PaxDb" id="6239-M03F8.4"/>
<dbReference type="EnsemblMetazoa" id="M03F8.4.1">
    <property type="protein sequence ID" value="M03F8.4.1"/>
    <property type="gene ID" value="WBGene00019763"/>
</dbReference>
<dbReference type="GeneID" id="187430"/>
<dbReference type="KEGG" id="cel:CELE_M03F8.4"/>
<dbReference type="UCSC" id="M03F8.4">
    <property type="organism name" value="c. elegans"/>
</dbReference>
<dbReference type="AGR" id="WB:WBGene00019763"/>
<dbReference type="CTD" id="187430"/>
<dbReference type="WormBase" id="M03F8.4">
    <property type="protein sequence ID" value="CE40769"/>
    <property type="gene ID" value="WBGene00019763"/>
    <property type="gene designation" value="galt-1"/>
</dbReference>
<dbReference type="eggNOG" id="ENOG502S8SJ">
    <property type="taxonomic scope" value="Eukaryota"/>
</dbReference>
<dbReference type="HOGENOM" id="CLU_053206_0_0_1"/>
<dbReference type="InParanoid" id="O16374"/>
<dbReference type="OMA" id="IPIRYRI"/>
<dbReference type="OrthoDB" id="2526284at2759"/>
<dbReference type="PhylomeDB" id="O16374"/>
<dbReference type="PRO" id="PR:O16374"/>
<dbReference type="Proteomes" id="UP000001940">
    <property type="component" value="Chromosome V"/>
</dbReference>
<dbReference type="Bgee" id="WBGene00019763">
    <property type="expression patterns" value="Expressed in embryo and 2 other cell types or tissues"/>
</dbReference>
<dbReference type="GO" id="GO:0005737">
    <property type="term" value="C:cytoplasm"/>
    <property type="evidence" value="ECO:0000318"/>
    <property type="project" value="GO_Central"/>
</dbReference>
<dbReference type="GO" id="GO:0032580">
    <property type="term" value="C:Golgi cisterna membrane"/>
    <property type="evidence" value="ECO:0007669"/>
    <property type="project" value="UniProtKB-SubCell"/>
</dbReference>
<dbReference type="GO" id="GO:0043229">
    <property type="term" value="C:intracellular organelle"/>
    <property type="evidence" value="ECO:0000314"/>
    <property type="project" value="WormBase"/>
</dbReference>
<dbReference type="GO" id="GO:0003831">
    <property type="term" value="F:beta-N-acetylglucosaminylglycopeptide beta-1,4-galactosyltransferase activity"/>
    <property type="evidence" value="ECO:0000314"/>
    <property type="project" value="UniProtKB"/>
</dbReference>
<dbReference type="GO" id="GO:0016757">
    <property type="term" value="F:glycosyltransferase activity"/>
    <property type="evidence" value="ECO:0000318"/>
    <property type="project" value="GO_Central"/>
</dbReference>
<dbReference type="GO" id="GO:0046872">
    <property type="term" value="F:metal ion binding"/>
    <property type="evidence" value="ECO:0007669"/>
    <property type="project" value="UniProtKB-KW"/>
</dbReference>
<dbReference type="GO" id="GO:0035250">
    <property type="term" value="F:UDP-galactosyltransferase activity"/>
    <property type="evidence" value="ECO:0000314"/>
    <property type="project" value="WormBase"/>
</dbReference>
<dbReference type="GO" id="GO:0070085">
    <property type="term" value="P:glycosylation"/>
    <property type="evidence" value="ECO:0000318"/>
    <property type="project" value="GO_Central"/>
</dbReference>
<dbReference type="GO" id="GO:0006491">
    <property type="term" value="P:N-glycan processing"/>
    <property type="evidence" value="ECO:0000314"/>
    <property type="project" value="WormBase"/>
</dbReference>
<dbReference type="GO" id="GO:0042125">
    <property type="term" value="P:protein galactosylation"/>
    <property type="evidence" value="ECO:0000314"/>
    <property type="project" value="UniProtKB"/>
</dbReference>
<dbReference type="InterPro" id="IPR008166">
    <property type="entry name" value="Glyco_transf_92"/>
</dbReference>
<dbReference type="PANTHER" id="PTHR21461:SF87">
    <property type="entry name" value="GH12965P"/>
    <property type="match status" value="1"/>
</dbReference>
<dbReference type="PANTHER" id="PTHR21461">
    <property type="entry name" value="GLYCOSYLTRANSFERASE FAMILY 92 PROTEIN"/>
    <property type="match status" value="1"/>
</dbReference>
<dbReference type="Pfam" id="PF01697">
    <property type="entry name" value="Glyco_transf_92"/>
    <property type="match status" value="1"/>
</dbReference>
<reference evidence="7" key="1">
    <citation type="journal article" date="1998" name="Science">
        <title>Genome sequence of the nematode C. elegans: a platform for investigating biology.</title>
        <authorList>
            <consortium name="The C. elegans sequencing consortium"/>
        </authorList>
    </citation>
    <scope>NUCLEOTIDE SEQUENCE [LARGE SCALE GENOMIC DNA]</scope>
    <source>
        <strain evidence="7">Bristol N2</strain>
    </source>
</reference>
<reference evidence="6" key="2">
    <citation type="journal article" date="2009" name="J. Biol. Chem.">
        <title>Molecular basis for galactosylation of core fucose residues in invertebrates: identification of caenorhabditis elegans N-glycan core alpha1,6-fucoside beta1,4-galactosyltransferase GALT-1 as a member of a novel glycosyltransferase family.</title>
        <authorList>
            <person name="Titz A."/>
            <person name="Butschi A."/>
            <person name="Henrissat B."/>
            <person name="Fan Y.Y."/>
            <person name="Hennet T."/>
            <person name="Razzazi-Fazeli E."/>
            <person name="Hengartner M.O."/>
            <person name="Wilson I.B."/>
            <person name="Kuenzler M."/>
            <person name="Aebi M."/>
        </authorList>
    </citation>
    <scope>FUNCTION</scope>
    <scope>CATALYTIC ACTIVITY</scope>
    <scope>COFACTOR</scope>
    <scope>ACTIVITY REGULATION</scope>
    <scope>BIOPHYSICOCHEMICAL PROPERTIES</scope>
    <scope>SUBCELLULAR LOCATION</scope>
    <scope>TISSUE SPECIFICITY</scope>
    <scope>GLYCOSYLATION</scope>
</reference>
<reference evidence="6" key="3">
    <citation type="journal article" date="2010" name="PLoS Pathog.">
        <title>Caenorhabditis elegans N-glycan core beta-galactoside confers sensitivity towards nematotoxic fungal galectin CGL2.</title>
        <authorList>
            <person name="Butschi A."/>
            <person name="Titz A."/>
            <person name="Waelti M.A."/>
            <person name="Olieric V."/>
            <person name="Paschinger K."/>
            <person name="Noebauer K."/>
            <person name="Guo X."/>
            <person name="Seeberger P.H."/>
            <person name="Wilson I.B."/>
            <person name="Aebi M."/>
            <person name="Hengartner M.O."/>
            <person name="Kuenzler M."/>
        </authorList>
    </citation>
    <scope>FUNCTION</scope>
</reference>
<protein>
    <recommendedName>
        <fullName evidence="5">Beta-1,4-galactosyltransferase galt-1</fullName>
        <ecNumber evidence="3">2.4.1.-</ecNumber>
    </recommendedName>
</protein>
<gene>
    <name evidence="8" type="primary">galt-1</name>
    <name evidence="8" type="ORF">M03F8.4</name>
</gene>
<feature type="chain" id="PRO_0000438180" description="Beta-1,4-galactosyltransferase galt-1">
    <location>
        <begin position="1"/>
        <end position="425"/>
    </location>
</feature>
<feature type="topological domain" description="Cytoplasmic" evidence="6">
    <location>
        <begin position="1"/>
        <end position="8"/>
    </location>
</feature>
<feature type="transmembrane region" description="Helical; Signal-anchor for type II membrane protein" evidence="1">
    <location>
        <begin position="9"/>
        <end position="29"/>
    </location>
</feature>
<feature type="topological domain" description="Lumenal" evidence="6">
    <location>
        <begin position="30"/>
        <end position="425"/>
    </location>
</feature>
<feature type="domain" description="GT92" evidence="1">
    <location>
        <begin position="189"/>
        <end position="394"/>
    </location>
</feature>
<feature type="glycosylation site" description="N-linked (GlcNAc...) asparagine" evidence="2">
    <location>
        <position position="109"/>
    </location>
</feature>
<feature type="glycosylation site" description="N-linked (GlcNAc...) asparagine" evidence="2">
    <location>
        <position position="152"/>
    </location>
</feature>